<accession>Q9SV41</accession>
<evidence type="ECO:0000250" key="1">
    <source>
        <dbReference type="UniProtKB" id="Q13362"/>
    </source>
</evidence>
<evidence type="ECO:0000256" key="2">
    <source>
        <dbReference type="SAM" id="MobiDB-lite"/>
    </source>
</evidence>
<evidence type="ECO:0000269" key="3">
    <source>
    </source>
</evidence>
<evidence type="ECO:0000269" key="4">
    <source>
    </source>
</evidence>
<evidence type="ECO:0000305" key="5"/>
<comment type="function">
    <text evidence="1">The B regulatory subunit may modulate substrate selectivity and catalytic activity, and may also direct the localization of the catalytic enzyme to a particular subcellular compartment.</text>
</comment>
<comment type="subunit">
    <text evidence="1">PP2A consists of a common heteromeric enzyme, composed of a catalytic subunit (subunits C), a constant regulatory subunit (subunit A), and a variety of regulatory subunits such as subunits B (the R2/B/PR55/B55, R3/B''/PR72/PR130/PR59 and R5/B'/B56 families).</text>
</comment>
<comment type="subcellular location">
    <subcellularLocation>
        <location evidence="4">Cytoplasm</location>
    </subcellularLocation>
</comment>
<comment type="tissue specificity">
    <text evidence="3">Expressed ubiquitously.</text>
</comment>
<comment type="similarity">
    <text evidence="5">Belongs to the phosphatase 2A regulatory subunit B56 family.</text>
</comment>
<dbReference type="EMBL" id="AJ276037">
    <property type="protein sequence ID" value="CAC16085.1"/>
    <property type="molecule type" value="Genomic_DNA"/>
</dbReference>
<dbReference type="EMBL" id="AL049655">
    <property type="protein sequence ID" value="CAB41091.1"/>
    <property type="molecule type" value="Genomic_DNA"/>
</dbReference>
<dbReference type="EMBL" id="CP002686">
    <property type="protein sequence ID" value="AEE79315.1"/>
    <property type="molecule type" value="Genomic_DNA"/>
</dbReference>
<dbReference type="EMBL" id="CP002686">
    <property type="protein sequence ID" value="ANM64909.1"/>
    <property type="molecule type" value="Genomic_DNA"/>
</dbReference>
<dbReference type="EMBL" id="BT010562">
    <property type="protein sequence ID" value="AAQ65185.1"/>
    <property type="molecule type" value="mRNA"/>
</dbReference>
<dbReference type="EMBL" id="AK175667">
    <property type="protein sequence ID" value="BAD43430.1"/>
    <property type="molecule type" value="mRNA"/>
</dbReference>
<dbReference type="PIR" id="T06727">
    <property type="entry name" value="T06727"/>
</dbReference>
<dbReference type="RefSeq" id="NP_001326910.1">
    <property type="nucleotide sequence ID" value="NM_001339704.1"/>
</dbReference>
<dbReference type="RefSeq" id="NP_191053.1">
    <property type="nucleotide sequence ID" value="NM_115350.3"/>
</dbReference>
<dbReference type="SMR" id="Q9SV41"/>
<dbReference type="BioGRID" id="9974">
    <property type="interactions" value="1"/>
</dbReference>
<dbReference type="FunCoup" id="Q9SV41">
    <property type="interactions" value="3096"/>
</dbReference>
<dbReference type="STRING" id="3702.Q9SV41"/>
<dbReference type="PaxDb" id="3702-AT3G54930.1"/>
<dbReference type="ProteomicsDB" id="245087"/>
<dbReference type="EnsemblPlants" id="AT3G54930.1">
    <property type="protein sequence ID" value="AT3G54930.1"/>
    <property type="gene ID" value="AT3G54930"/>
</dbReference>
<dbReference type="EnsemblPlants" id="AT3G54930.2">
    <property type="protein sequence ID" value="AT3G54930.2"/>
    <property type="gene ID" value="AT3G54930"/>
</dbReference>
<dbReference type="GeneID" id="824658"/>
<dbReference type="Gramene" id="AT3G54930.1">
    <property type="protein sequence ID" value="AT3G54930.1"/>
    <property type="gene ID" value="AT3G54930"/>
</dbReference>
<dbReference type="Gramene" id="AT3G54930.2">
    <property type="protein sequence ID" value="AT3G54930.2"/>
    <property type="gene ID" value="AT3G54930"/>
</dbReference>
<dbReference type="KEGG" id="ath:AT3G54930"/>
<dbReference type="Araport" id="AT3G54930"/>
<dbReference type="TAIR" id="AT3G54930"/>
<dbReference type="eggNOG" id="KOG2085">
    <property type="taxonomic scope" value="Eukaryota"/>
</dbReference>
<dbReference type="HOGENOM" id="CLU_012437_3_2_1"/>
<dbReference type="InParanoid" id="Q9SV41"/>
<dbReference type="OMA" id="ERNMYGH"/>
<dbReference type="OrthoDB" id="10264446at2759"/>
<dbReference type="PhylomeDB" id="Q9SV41"/>
<dbReference type="PRO" id="PR:Q9SV41"/>
<dbReference type="Proteomes" id="UP000006548">
    <property type="component" value="Chromosome 3"/>
</dbReference>
<dbReference type="ExpressionAtlas" id="Q9SV41">
    <property type="expression patterns" value="baseline and differential"/>
</dbReference>
<dbReference type="GO" id="GO:0005737">
    <property type="term" value="C:cytoplasm"/>
    <property type="evidence" value="ECO:0000314"/>
    <property type="project" value="UniProtKB"/>
</dbReference>
<dbReference type="GO" id="GO:0000159">
    <property type="term" value="C:protein phosphatase type 2A complex"/>
    <property type="evidence" value="ECO:0007669"/>
    <property type="project" value="InterPro"/>
</dbReference>
<dbReference type="GO" id="GO:0019888">
    <property type="term" value="F:protein phosphatase regulator activity"/>
    <property type="evidence" value="ECO:0007669"/>
    <property type="project" value="InterPro"/>
</dbReference>
<dbReference type="GO" id="GO:0007165">
    <property type="term" value="P:signal transduction"/>
    <property type="evidence" value="ECO:0007669"/>
    <property type="project" value="InterPro"/>
</dbReference>
<dbReference type="FunFam" id="1.25.10.10:FF:000041">
    <property type="entry name" value="Serine/threonine protein phosphatase 2A regulatory subunit"/>
    <property type="match status" value="1"/>
</dbReference>
<dbReference type="Gene3D" id="1.25.10.10">
    <property type="entry name" value="Leucine-rich Repeat Variant"/>
    <property type="match status" value="1"/>
</dbReference>
<dbReference type="InterPro" id="IPR011989">
    <property type="entry name" value="ARM-like"/>
</dbReference>
<dbReference type="InterPro" id="IPR016024">
    <property type="entry name" value="ARM-type_fold"/>
</dbReference>
<dbReference type="InterPro" id="IPR002554">
    <property type="entry name" value="PP2A_B56"/>
</dbReference>
<dbReference type="PANTHER" id="PTHR10257">
    <property type="entry name" value="SERINE/THREONINE PROTEIN PHOSPHATASE 2A PP2A REGULATORY SUBUNIT B"/>
    <property type="match status" value="1"/>
</dbReference>
<dbReference type="PANTHER" id="PTHR10257:SF76">
    <property type="entry name" value="SERINE_THREONINE PROTEIN PHOSPHATASE 2A 57 KDA REGULATORY SUBUNIT B' EPSILON ISOFORM"/>
    <property type="match status" value="1"/>
</dbReference>
<dbReference type="Pfam" id="PF01603">
    <property type="entry name" value="B56"/>
    <property type="match status" value="1"/>
</dbReference>
<dbReference type="PIRSF" id="PIRSF028043">
    <property type="entry name" value="PP2A_B56"/>
    <property type="match status" value="1"/>
</dbReference>
<dbReference type="SUPFAM" id="SSF48371">
    <property type="entry name" value="ARM repeat"/>
    <property type="match status" value="1"/>
</dbReference>
<feature type="chain" id="PRO_0000071464" description="Serine/threonine protein phosphatase 2A 57 kDa regulatory subunit B' epsilon isoform">
    <location>
        <begin position="1"/>
        <end position="497"/>
    </location>
</feature>
<feature type="region of interest" description="Disordered" evidence="2">
    <location>
        <begin position="12"/>
        <end position="71"/>
    </location>
</feature>
<feature type="compositionally biased region" description="Low complexity" evidence="2">
    <location>
        <begin position="23"/>
        <end position="34"/>
    </location>
</feature>
<feature type="compositionally biased region" description="Polar residues" evidence="2">
    <location>
        <begin position="35"/>
        <end position="71"/>
    </location>
</feature>
<proteinExistence type="evidence at transcript level"/>
<sequence length="497" mass="57545">MFNKIIKLGQKKFNKSDQHHQDNNNNNNNTSTNTVVRGSRTTTPAPSSVSNGESQTTAQSPSQTPNHPMFTTTPILEVLPLLKDVSSSDRPLLFMKKAHMCSCHCDFSDTLIMPREKEIKRQTLLELVDFLHSSSGKVNETMQSELIRMVSANIFRCLPPAYHENTGAPPEGNDPEEEEPYLEPWWPHLQLVYELLLRYVVSSEIEPKTAKKFINHTFVSRLLDLFDSEDPREREYLKTVLHRIYGKFIFHRPFIRCSIYNIFYKFLYETERCIGIGELLEILGSVINGFTVPMREEHRLYLVKAILPLHKSKGISIYHQQLAYCVTQFVEKDYKLADTVIRGLLKFWPLTNCQKEVLFLGELEEVLDATEPSEFQQCVVPLFTQIGKCLNSAHFQVAERALFLWNNEHIVGLIAQNKDVIFPIIFEALERNMKGHWNQAVHGLSENVRRMFLEMDTELFEECEKQYLENEAKACELLEQRELTWKRLEEAASLAAN</sequence>
<protein>
    <recommendedName>
        <fullName>Serine/threonine protein phosphatase 2A 57 kDa regulatory subunit B' epsilon isoform</fullName>
        <shortName>AtB' epsilon</shortName>
        <shortName>PP2A, B' subunit, epsilon isoform</shortName>
    </recommendedName>
</protein>
<organism>
    <name type="scientific">Arabidopsis thaliana</name>
    <name type="common">Mouse-ear cress</name>
    <dbReference type="NCBI Taxonomy" id="3702"/>
    <lineage>
        <taxon>Eukaryota</taxon>
        <taxon>Viridiplantae</taxon>
        <taxon>Streptophyta</taxon>
        <taxon>Embryophyta</taxon>
        <taxon>Tracheophyta</taxon>
        <taxon>Spermatophyta</taxon>
        <taxon>Magnoliopsida</taxon>
        <taxon>eudicotyledons</taxon>
        <taxon>Gunneridae</taxon>
        <taxon>Pentapetalae</taxon>
        <taxon>rosids</taxon>
        <taxon>malvids</taxon>
        <taxon>Brassicales</taxon>
        <taxon>Brassicaceae</taxon>
        <taxon>Camelineae</taxon>
        <taxon>Arabidopsis</taxon>
    </lineage>
</organism>
<reference key="1">
    <citation type="journal article" date="2002" name="Plant Physiol.">
        <title>Molecular characterization and evolution of the protein phosphatase 2A B' regulatory subunit family in plants.</title>
        <authorList>
            <person name="Terol J."/>
            <person name="Bargues M."/>
            <person name="Carrasco P."/>
            <person name="Perez-Alonso M."/>
            <person name="Paricio N."/>
        </authorList>
    </citation>
    <scope>NUCLEOTIDE SEQUENCE [GENOMIC DNA]</scope>
    <scope>TISSUE SPECIFICITY</scope>
    <scope>NOMENCLATURE</scope>
</reference>
<reference key="2">
    <citation type="journal article" date="2000" name="Nature">
        <title>Sequence and analysis of chromosome 3 of the plant Arabidopsis thaliana.</title>
        <authorList>
            <person name="Salanoubat M."/>
            <person name="Lemcke K."/>
            <person name="Rieger M."/>
            <person name="Ansorge W."/>
            <person name="Unseld M."/>
            <person name="Fartmann B."/>
            <person name="Valle G."/>
            <person name="Bloecker H."/>
            <person name="Perez-Alonso M."/>
            <person name="Obermaier B."/>
            <person name="Delseny M."/>
            <person name="Boutry M."/>
            <person name="Grivell L.A."/>
            <person name="Mache R."/>
            <person name="Puigdomenech P."/>
            <person name="De Simone V."/>
            <person name="Choisne N."/>
            <person name="Artiguenave F."/>
            <person name="Robert C."/>
            <person name="Brottier P."/>
            <person name="Wincker P."/>
            <person name="Cattolico L."/>
            <person name="Weissenbach J."/>
            <person name="Saurin W."/>
            <person name="Quetier F."/>
            <person name="Schaefer M."/>
            <person name="Mueller-Auer S."/>
            <person name="Gabel C."/>
            <person name="Fuchs M."/>
            <person name="Benes V."/>
            <person name="Wurmbach E."/>
            <person name="Drzonek H."/>
            <person name="Erfle H."/>
            <person name="Jordan N."/>
            <person name="Bangert S."/>
            <person name="Wiedelmann R."/>
            <person name="Kranz H."/>
            <person name="Voss H."/>
            <person name="Holland R."/>
            <person name="Brandt P."/>
            <person name="Nyakatura G."/>
            <person name="Vezzi A."/>
            <person name="D'Angelo M."/>
            <person name="Pallavicini A."/>
            <person name="Toppo S."/>
            <person name="Simionati B."/>
            <person name="Conrad A."/>
            <person name="Hornischer K."/>
            <person name="Kauer G."/>
            <person name="Loehnert T.-H."/>
            <person name="Nordsiek G."/>
            <person name="Reichelt J."/>
            <person name="Scharfe M."/>
            <person name="Schoen O."/>
            <person name="Bargues M."/>
            <person name="Terol J."/>
            <person name="Climent J."/>
            <person name="Navarro P."/>
            <person name="Collado C."/>
            <person name="Perez-Perez A."/>
            <person name="Ottenwaelder B."/>
            <person name="Duchemin D."/>
            <person name="Cooke R."/>
            <person name="Laudie M."/>
            <person name="Berger-Llauro C."/>
            <person name="Purnelle B."/>
            <person name="Masuy D."/>
            <person name="de Haan M."/>
            <person name="Maarse A.C."/>
            <person name="Alcaraz J.-P."/>
            <person name="Cottet A."/>
            <person name="Casacuberta E."/>
            <person name="Monfort A."/>
            <person name="Argiriou A."/>
            <person name="Flores M."/>
            <person name="Liguori R."/>
            <person name="Vitale D."/>
            <person name="Mannhaupt G."/>
            <person name="Haase D."/>
            <person name="Schoof H."/>
            <person name="Rudd S."/>
            <person name="Zaccaria P."/>
            <person name="Mewes H.-W."/>
            <person name="Mayer K.F.X."/>
            <person name="Kaul S."/>
            <person name="Town C.D."/>
            <person name="Koo H.L."/>
            <person name="Tallon L.J."/>
            <person name="Jenkins J."/>
            <person name="Rooney T."/>
            <person name="Rizzo M."/>
            <person name="Walts A."/>
            <person name="Utterback T."/>
            <person name="Fujii C.Y."/>
            <person name="Shea T.P."/>
            <person name="Creasy T.H."/>
            <person name="Haas B."/>
            <person name="Maiti R."/>
            <person name="Wu D."/>
            <person name="Peterson J."/>
            <person name="Van Aken S."/>
            <person name="Pai G."/>
            <person name="Militscher J."/>
            <person name="Sellers P."/>
            <person name="Gill J.E."/>
            <person name="Feldblyum T.V."/>
            <person name="Preuss D."/>
            <person name="Lin X."/>
            <person name="Nierman W.C."/>
            <person name="Salzberg S.L."/>
            <person name="White O."/>
            <person name="Venter J.C."/>
            <person name="Fraser C.M."/>
            <person name="Kaneko T."/>
            <person name="Nakamura Y."/>
            <person name="Sato S."/>
            <person name="Kato T."/>
            <person name="Asamizu E."/>
            <person name="Sasamoto S."/>
            <person name="Kimura T."/>
            <person name="Idesawa K."/>
            <person name="Kawashima K."/>
            <person name="Kishida Y."/>
            <person name="Kiyokawa C."/>
            <person name="Kohara M."/>
            <person name="Matsumoto M."/>
            <person name="Matsuno A."/>
            <person name="Muraki A."/>
            <person name="Nakayama S."/>
            <person name="Nakazaki N."/>
            <person name="Shinpo S."/>
            <person name="Takeuchi C."/>
            <person name="Wada T."/>
            <person name="Watanabe A."/>
            <person name="Yamada M."/>
            <person name="Yasuda M."/>
            <person name="Tabata S."/>
        </authorList>
    </citation>
    <scope>NUCLEOTIDE SEQUENCE [LARGE SCALE GENOMIC DNA]</scope>
    <source>
        <strain>cv. Columbia</strain>
    </source>
</reference>
<reference key="3">
    <citation type="journal article" date="2017" name="Plant J.">
        <title>Araport11: a complete reannotation of the Arabidopsis thaliana reference genome.</title>
        <authorList>
            <person name="Cheng C.Y."/>
            <person name="Krishnakumar V."/>
            <person name="Chan A.P."/>
            <person name="Thibaud-Nissen F."/>
            <person name="Schobel S."/>
            <person name="Town C.D."/>
        </authorList>
    </citation>
    <scope>GENOME REANNOTATION</scope>
    <source>
        <strain>cv. Columbia</strain>
    </source>
</reference>
<reference key="4">
    <citation type="journal article" date="2003" name="Science">
        <title>Empirical analysis of transcriptional activity in the Arabidopsis genome.</title>
        <authorList>
            <person name="Yamada K."/>
            <person name="Lim J."/>
            <person name="Dale J.M."/>
            <person name="Chen H."/>
            <person name="Shinn P."/>
            <person name="Palm C.J."/>
            <person name="Southwick A.M."/>
            <person name="Wu H.C."/>
            <person name="Kim C.J."/>
            <person name="Nguyen M."/>
            <person name="Pham P.K."/>
            <person name="Cheuk R.F."/>
            <person name="Karlin-Newmann G."/>
            <person name="Liu S.X."/>
            <person name="Lam B."/>
            <person name="Sakano H."/>
            <person name="Wu T."/>
            <person name="Yu G."/>
            <person name="Miranda M."/>
            <person name="Quach H.L."/>
            <person name="Tripp M."/>
            <person name="Chang C.H."/>
            <person name="Lee J.M."/>
            <person name="Toriumi M.J."/>
            <person name="Chan M.M."/>
            <person name="Tang C.C."/>
            <person name="Onodera C.S."/>
            <person name="Deng J.M."/>
            <person name="Akiyama K."/>
            <person name="Ansari Y."/>
            <person name="Arakawa T."/>
            <person name="Banh J."/>
            <person name="Banno F."/>
            <person name="Bowser L."/>
            <person name="Brooks S.Y."/>
            <person name="Carninci P."/>
            <person name="Chao Q."/>
            <person name="Choy N."/>
            <person name="Enju A."/>
            <person name="Goldsmith A.D."/>
            <person name="Gurjal M."/>
            <person name="Hansen N.F."/>
            <person name="Hayashizaki Y."/>
            <person name="Johnson-Hopson C."/>
            <person name="Hsuan V.W."/>
            <person name="Iida K."/>
            <person name="Karnes M."/>
            <person name="Khan S."/>
            <person name="Koesema E."/>
            <person name="Ishida J."/>
            <person name="Jiang P.X."/>
            <person name="Jones T."/>
            <person name="Kawai J."/>
            <person name="Kamiya A."/>
            <person name="Meyers C."/>
            <person name="Nakajima M."/>
            <person name="Narusaka M."/>
            <person name="Seki M."/>
            <person name="Sakurai T."/>
            <person name="Satou M."/>
            <person name="Tamse R."/>
            <person name="Vaysberg M."/>
            <person name="Wallender E.K."/>
            <person name="Wong C."/>
            <person name="Yamamura Y."/>
            <person name="Yuan S."/>
            <person name="Shinozaki K."/>
            <person name="Davis R.W."/>
            <person name="Theologis A."/>
            <person name="Ecker J.R."/>
        </authorList>
    </citation>
    <scope>NUCLEOTIDE SEQUENCE [LARGE SCALE MRNA]</scope>
    <source>
        <strain>cv. Columbia</strain>
    </source>
</reference>
<reference key="5">
    <citation type="submission" date="2004-09" db="EMBL/GenBank/DDBJ databases">
        <title>Large-scale analysis of RIKEN Arabidopsis full-length (RAFL) cDNAs.</title>
        <authorList>
            <person name="Totoki Y."/>
            <person name="Seki M."/>
            <person name="Ishida J."/>
            <person name="Nakajima M."/>
            <person name="Enju A."/>
            <person name="Kamiya A."/>
            <person name="Narusaka M."/>
            <person name="Shin-i T."/>
            <person name="Nakagawa M."/>
            <person name="Sakamoto N."/>
            <person name="Oishi K."/>
            <person name="Kohara Y."/>
            <person name="Kobayashi M."/>
            <person name="Toyoda A."/>
            <person name="Sakaki Y."/>
            <person name="Sakurai T."/>
            <person name="Iida K."/>
            <person name="Akiyama K."/>
            <person name="Satou M."/>
            <person name="Toyoda T."/>
            <person name="Konagaya A."/>
            <person name="Carninci P."/>
            <person name="Kawai J."/>
            <person name="Hayashizaki Y."/>
            <person name="Shinozaki K."/>
        </authorList>
    </citation>
    <scope>NUCLEOTIDE SEQUENCE [LARGE SCALE MRNA]</scope>
    <source>
        <strain>cv. Columbia</strain>
    </source>
</reference>
<reference key="6">
    <citation type="journal article" date="2016" name="Mol. Plant">
        <title>The brassinosteroid-activated BRI1 receptor kinase is switched off by dephosphorylation mediated by cytoplasm-localized PP2A B' subunits.</title>
        <authorList>
            <person name="Wang R."/>
            <person name="Liu M."/>
            <person name="Yuan M."/>
            <person name="Oses-Prieto J.A."/>
            <person name="Cai X."/>
            <person name="Sun Y."/>
            <person name="Burlingame A.L."/>
            <person name="Wang Z.Y."/>
            <person name="Tang W."/>
        </authorList>
    </citation>
    <scope>SUBCELLULAR LOCATION</scope>
</reference>
<name>2A5E_ARATH</name>
<gene>
    <name type="primary">B'EPSILON</name>
    <name type="ordered locus">At3g54930</name>
    <name type="ORF">F28P10.90</name>
</gene>
<keyword id="KW-0963">Cytoplasm</keyword>
<keyword id="KW-1185">Reference proteome</keyword>